<protein>
    <recommendedName>
        <fullName evidence="1">Glycerol-1-phosphate dehydrogenase [NAD(P)+]</fullName>
        <shortName evidence="1">G1P dehydrogenase</shortName>
        <shortName evidence="1">G1PDH</shortName>
        <ecNumber evidence="1">1.1.1.261</ecNumber>
    </recommendedName>
    <alternativeName>
        <fullName evidence="1">Enantiomeric glycerophosphate synthase</fullName>
    </alternativeName>
    <alternativeName>
        <fullName evidence="1">sn-glycerol-1-phosphate dehydrogenase</fullName>
    </alternativeName>
</protein>
<dbReference type="EC" id="1.1.1.261" evidence="1"/>
<dbReference type="EMBL" id="CP000505">
    <property type="protein sequence ID" value="ABL78629.1"/>
    <property type="molecule type" value="Genomic_DNA"/>
</dbReference>
<dbReference type="SMR" id="A1RZJ9"/>
<dbReference type="STRING" id="368408.Tpen_1231"/>
<dbReference type="EnsemblBacteria" id="ABL78629">
    <property type="protein sequence ID" value="ABL78629"/>
    <property type="gene ID" value="Tpen_1231"/>
</dbReference>
<dbReference type="KEGG" id="tpe:Tpen_1231"/>
<dbReference type="eggNOG" id="arCOG00982">
    <property type="taxonomic scope" value="Archaea"/>
</dbReference>
<dbReference type="HOGENOM" id="CLU_038362_0_0_2"/>
<dbReference type="UniPathway" id="UPA00940"/>
<dbReference type="Proteomes" id="UP000000641">
    <property type="component" value="Chromosome"/>
</dbReference>
<dbReference type="GO" id="GO:0005737">
    <property type="term" value="C:cytoplasm"/>
    <property type="evidence" value="ECO:0007669"/>
    <property type="project" value="UniProtKB-SubCell"/>
</dbReference>
<dbReference type="GO" id="GO:0106357">
    <property type="term" value="F:glycerol-1-phosphate dehydrogenase (NAD+) activity"/>
    <property type="evidence" value="ECO:0007669"/>
    <property type="project" value="RHEA"/>
</dbReference>
<dbReference type="GO" id="GO:0106358">
    <property type="term" value="F:glycerol-1-phosphate dehydrogenase (NADP+) activity"/>
    <property type="evidence" value="ECO:0007669"/>
    <property type="project" value="RHEA"/>
</dbReference>
<dbReference type="GO" id="GO:0046872">
    <property type="term" value="F:metal ion binding"/>
    <property type="evidence" value="ECO:0007669"/>
    <property type="project" value="UniProtKB-KW"/>
</dbReference>
<dbReference type="GO" id="GO:0006650">
    <property type="term" value="P:glycerophospholipid metabolic process"/>
    <property type="evidence" value="ECO:0007669"/>
    <property type="project" value="UniProtKB-UniRule"/>
</dbReference>
<dbReference type="GO" id="GO:0008654">
    <property type="term" value="P:phospholipid biosynthetic process"/>
    <property type="evidence" value="ECO:0007669"/>
    <property type="project" value="UniProtKB-KW"/>
</dbReference>
<dbReference type="Gene3D" id="3.40.50.1970">
    <property type="match status" value="1"/>
</dbReference>
<dbReference type="Gene3D" id="1.20.1090.10">
    <property type="entry name" value="Dehydroquinate synthase-like - alpha domain"/>
    <property type="match status" value="1"/>
</dbReference>
<dbReference type="HAMAP" id="MF_00497_A">
    <property type="entry name" value="G1P_dehydrogenase_A"/>
    <property type="match status" value="1"/>
</dbReference>
<dbReference type="InterPro" id="IPR023002">
    <property type="entry name" value="G1P_dehydrogenase_arc"/>
</dbReference>
<dbReference type="InterPro" id="IPR032837">
    <property type="entry name" value="G1PDH"/>
</dbReference>
<dbReference type="InterPro" id="IPR016205">
    <property type="entry name" value="Glycerol_DH"/>
</dbReference>
<dbReference type="PANTHER" id="PTHR43616">
    <property type="entry name" value="GLYCEROL DEHYDROGENASE"/>
    <property type="match status" value="1"/>
</dbReference>
<dbReference type="PANTHER" id="PTHR43616:SF5">
    <property type="entry name" value="GLYCEROL DEHYDROGENASE 1"/>
    <property type="match status" value="1"/>
</dbReference>
<dbReference type="Pfam" id="PF13685">
    <property type="entry name" value="Fe-ADH_2"/>
    <property type="match status" value="1"/>
</dbReference>
<dbReference type="PIRSF" id="PIRSF000112">
    <property type="entry name" value="Glycerol_dehydrogenase"/>
    <property type="match status" value="1"/>
</dbReference>
<dbReference type="SUPFAM" id="SSF56796">
    <property type="entry name" value="Dehydroquinate synthase-like"/>
    <property type="match status" value="1"/>
</dbReference>
<reference key="1">
    <citation type="journal article" date="2008" name="J. Bacteriol.">
        <title>Genome sequence of Thermofilum pendens reveals an exceptional loss of biosynthetic pathways without genome reduction.</title>
        <authorList>
            <person name="Anderson I."/>
            <person name="Rodriguez J."/>
            <person name="Susanti D."/>
            <person name="Porat I."/>
            <person name="Reich C."/>
            <person name="Ulrich L.E."/>
            <person name="Elkins J.G."/>
            <person name="Mavromatis K."/>
            <person name="Lykidis A."/>
            <person name="Kim E."/>
            <person name="Thompson L.S."/>
            <person name="Nolan M."/>
            <person name="Land M."/>
            <person name="Copeland A."/>
            <person name="Lapidus A."/>
            <person name="Lucas S."/>
            <person name="Detter C."/>
            <person name="Zhulin I.B."/>
            <person name="Olsen G.J."/>
            <person name="Whitman W."/>
            <person name="Mukhopadhyay B."/>
            <person name="Bristow J."/>
            <person name="Kyrpides N."/>
        </authorList>
    </citation>
    <scope>NUCLEOTIDE SEQUENCE [LARGE SCALE GENOMIC DNA]</scope>
    <source>
        <strain>DSM 2475 / Hrk 5</strain>
    </source>
</reference>
<comment type="function">
    <text evidence="1">Catalyzes the NAD(P)H-dependent reduction of dihydroxyacetonephosphate (DHAP or glycerone phosphate) to glycerol 1-phosphate (G1P). The G1P thus generated is used as the glycerophosphate backbone of phospholipids in the cellular membranes of Archaea.</text>
</comment>
<comment type="catalytic activity">
    <reaction evidence="1">
        <text>sn-glycerol 1-phosphate + NAD(+) = dihydroxyacetone phosphate + NADH + H(+)</text>
        <dbReference type="Rhea" id="RHEA:21412"/>
        <dbReference type="ChEBI" id="CHEBI:15378"/>
        <dbReference type="ChEBI" id="CHEBI:57540"/>
        <dbReference type="ChEBI" id="CHEBI:57642"/>
        <dbReference type="ChEBI" id="CHEBI:57685"/>
        <dbReference type="ChEBI" id="CHEBI:57945"/>
        <dbReference type="EC" id="1.1.1.261"/>
    </reaction>
</comment>
<comment type="catalytic activity">
    <reaction evidence="1">
        <text>sn-glycerol 1-phosphate + NADP(+) = dihydroxyacetone phosphate + NADPH + H(+)</text>
        <dbReference type="Rhea" id="RHEA:21416"/>
        <dbReference type="ChEBI" id="CHEBI:15378"/>
        <dbReference type="ChEBI" id="CHEBI:57642"/>
        <dbReference type="ChEBI" id="CHEBI:57685"/>
        <dbReference type="ChEBI" id="CHEBI:57783"/>
        <dbReference type="ChEBI" id="CHEBI:58349"/>
        <dbReference type="EC" id="1.1.1.261"/>
    </reaction>
</comment>
<comment type="cofactor">
    <cofactor evidence="1">
        <name>Zn(2+)</name>
        <dbReference type="ChEBI" id="CHEBI:29105"/>
    </cofactor>
    <text evidence="1">Binds 1 zinc ion per subunit.</text>
</comment>
<comment type="pathway">
    <text evidence="1">Membrane lipid metabolism; glycerophospholipid metabolism.</text>
</comment>
<comment type="subunit">
    <text evidence="1">Homodimer.</text>
</comment>
<comment type="subcellular location">
    <subcellularLocation>
        <location evidence="1">Cytoplasm</location>
    </subcellularLocation>
</comment>
<comment type="similarity">
    <text evidence="1">Belongs to the glycerol-1-phosphate dehydrogenase family.</text>
</comment>
<keyword id="KW-0963">Cytoplasm</keyword>
<keyword id="KW-0444">Lipid biosynthesis</keyword>
<keyword id="KW-0443">Lipid metabolism</keyword>
<keyword id="KW-0479">Metal-binding</keyword>
<keyword id="KW-0520">NAD</keyword>
<keyword id="KW-0521">NADP</keyword>
<keyword id="KW-0560">Oxidoreductase</keyword>
<keyword id="KW-0594">Phospholipid biosynthesis</keyword>
<keyword id="KW-1208">Phospholipid metabolism</keyword>
<keyword id="KW-1185">Reference proteome</keyword>
<keyword id="KW-0862">Zinc</keyword>
<name>G1PDH_THEPD</name>
<gene>
    <name evidence="1" type="primary">egsA</name>
    <name type="ordered locus">Tpen_1231</name>
</gene>
<proteinExistence type="inferred from homology"/>
<feature type="chain" id="PRO_0000350663" description="Glycerol-1-phosphate dehydrogenase [NAD(P)+]">
    <location>
        <begin position="1"/>
        <end position="347"/>
    </location>
</feature>
<feature type="binding site" evidence="1">
    <location>
        <begin position="90"/>
        <end position="94"/>
    </location>
    <ligand>
        <name>NAD(+)</name>
        <dbReference type="ChEBI" id="CHEBI:57540"/>
    </ligand>
</feature>
<feature type="binding site" evidence="1">
    <location>
        <begin position="112"/>
        <end position="115"/>
    </location>
    <ligand>
        <name>NAD(+)</name>
        <dbReference type="ChEBI" id="CHEBI:57540"/>
    </ligand>
</feature>
<feature type="binding site" evidence="1">
    <location>
        <position position="117"/>
    </location>
    <ligand>
        <name>substrate</name>
    </ligand>
</feature>
<feature type="binding site" evidence="1">
    <location>
        <position position="121"/>
    </location>
    <ligand>
        <name>NAD(+)</name>
        <dbReference type="ChEBI" id="CHEBI:57540"/>
    </ligand>
</feature>
<feature type="binding site" evidence="1">
    <location>
        <position position="165"/>
    </location>
    <ligand>
        <name>substrate</name>
    </ligand>
</feature>
<feature type="binding site" evidence="1">
    <location>
        <position position="165"/>
    </location>
    <ligand>
        <name>Zn(2+)</name>
        <dbReference type="ChEBI" id="CHEBI:29105"/>
        <note>catalytic</note>
    </ligand>
</feature>
<feature type="binding site" evidence="1">
    <location>
        <position position="245"/>
    </location>
    <ligand>
        <name>Zn(2+)</name>
        <dbReference type="ChEBI" id="CHEBI:29105"/>
        <note>catalytic</note>
    </ligand>
</feature>
<feature type="binding site" evidence="1">
    <location>
        <position position="249"/>
    </location>
    <ligand>
        <name>substrate</name>
    </ligand>
</feature>
<feature type="binding site" evidence="1">
    <location>
        <position position="262"/>
    </location>
    <ligand>
        <name>Zn(2+)</name>
        <dbReference type="ChEBI" id="CHEBI:29105"/>
        <note>catalytic</note>
    </ligand>
</feature>
<accession>A1RZJ9</accession>
<sequence>MRAELPKRVVVERGALQFLPEVLRELGCSKTVVVTDSGVWSVVGSVVEGALRGLAYEVVYIEAADNSNVERARSAARRVEACAVAGLGGGRPVDVAKYAAFMEGLPFVSVPTAISHDGFASPIVALKDPEGNPLSIFTRPPAAVLVDLAVVSRAPRRLLASGVGDIVGKVTSVADARLAQRLTGEEVPEVALRMAETAARMVLDEVDEIASWTERGVGVLAQAGLLAGMAMAVAGSSRPCSGSEHLFSHSLDKYVPWKKSLHGEQVGVGAIIASYLHGFNWRVIRDALAKVGAPTTVEGLGVTGEDAVRALLKARELRKRFTILDVVELNEGLAWKVLRETGVAPTA</sequence>
<evidence type="ECO:0000255" key="1">
    <source>
        <dbReference type="HAMAP-Rule" id="MF_00497"/>
    </source>
</evidence>
<organism>
    <name type="scientific">Thermofilum pendens (strain DSM 2475 / Hrk 5)</name>
    <dbReference type="NCBI Taxonomy" id="368408"/>
    <lineage>
        <taxon>Archaea</taxon>
        <taxon>Thermoproteota</taxon>
        <taxon>Thermoprotei</taxon>
        <taxon>Thermofilales</taxon>
        <taxon>Thermofilaceae</taxon>
        <taxon>Thermofilum</taxon>
    </lineage>
</organism>